<accession>O65403</accession>
<sequence length="516" mass="57027">MTYAWLWTLLAFVLTWMVFHLIKMKKAATGDLEAEAEARRDGATDVIIVGAGVAGASLAYALAKDGRRVHVIERDLKEPQRFMGELMQAGGRFMLAQLGLEDCLEDIDAQEAKSLAIYKDGKHATLPFPDDKSFPHEPVGRLLRNGRLVQRLRQKAASLSNVQLEEGTVKSLIEEEGVVKGVTYKNSAGEEITAFAPLTVVCDGCYSNLRRSLVDNTEEVLSYMVGYVTKNSRLEDPHSLHLIFSKPLVCVIYQITSDEVRCVAEVPADSIPSISNGEMSTFLKKSMAPQIPETGNLREIFLKGIEEGLPEIKSTATKSMSSRLCDKRGVIVLGDAFNMRHPIIASGMMVALSDICILRNLLKPLPNLSNTKKVSDLVKSFYIIRKPMSATVNTLASIFSQVLVATTDEAREGMRQGCFNYLARGDFKTRGLMTILGGMNPHPLTLVLHLVAITLTSMGHLLSPFPSPRRFWHSLRILAWALQMLGAHLVDEGFKEMLIPTNAAAYRRNYIATTTV</sequence>
<proteinExistence type="evidence at transcript level"/>
<protein>
    <recommendedName>
        <fullName>Squalene epoxidase 4</fullName>
        <shortName>AtSQE4</shortName>
        <ecNumber evidence="2">1.14.14.17</ecNumber>
    </recommendedName>
    <alternativeName>
        <fullName>Squalene monooxygenase 2</fullName>
        <shortName>SE 2</shortName>
    </alternativeName>
</protein>
<keyword id="KW-0274">FAD</keyword>
<keyword id="KW-0285">Flavoprotein</keyword>
<keyword id="KW-0472">Membrane</keyword>
<keyword id="KW-0560">Oxidoreductase</keyword>
<keyword id="KW-1185">Reference proteome</keyword>
<keyword id="KW-0812">Transmembrane</keyword>
<keyword id="KW-1133">Transmembrane helix</keyword>
<evidence type="ECO:0000250" key="1">
    <source>
        <dbReference type="UniProtKB" id="Q14534"/>
    </source>
</evidence>
<evidence type="ECO:0000250" key="2">
    <source>
        <dbReference type="UniProtKB" id="Q9SM02"/>
    </source>
</evidence>
<evidence type="ECO:0000255" key="3"/>
<evidence type="ECO:0000269" key="4">
    <source>
    </source>
</evidence>
<evidence type="ECO:0000305" key="5"/>
<evidence type="ECO:0000305" key="6">
    <source>
    </source>
</evidence>
<gene>
    <name type="primary">SQE4</name>
    <name type="synonym">SQP2</name>
    <name type="ordered locus">At5g24140</name>
    <name type="ORF">MLE8.6</name>
</gene>
<organism>
    <name type="scientific">Arabidopsis thaliana</name>
    <name type="common">Mouse-ear cress</name>
    <dbReference type="NCBI Taxonomy" id="3702"/>
    <lineage>
        <taxon>Eukaryota</taxon>
        <taxon>Viridiplantae</taxon>
        <taxon>Streptophyta</taxon>
        <taxon>Embryophyta</taxon>
        <taxon>Tracheophyta</taxon>
        <taxon>Spermatophyta</taxon>
        <taxon>Magnoliopsida</taxon>
        <taxon>eudicotyledons</taxon>
        <taxon>Gunneridae</taxon>
        <taxon>Pentapetalae</taxon>
        <taxon>rosids</taxon>
        <taxon>malvids</taxon>
        <taxon>Brassicales</taxon>
        <taxon>Brassicaceae</taxon>
        <taxon>Camelineae</taxon>
        <taxon>Arabidopsis</taxon>
    </lineage>
</organism>
<feature type="chain" id="PRO_0000209843" description="Squalene epoxidase 4">
    <location>
        <begin position="1"/>
        <end position="516"/>
    </location>
</feature>
<feature type="transmembrane region" description="Helical" evidence="3">
    <location>
        <begin position="2"/>
        <end position="22"/>
    </location>
</feature>
<feature type="transmembrane region" description="Helical" evidence="3">
    <location>
        <begin position="43"/>
        <end position="63"/>
    </location>
</feature>
<feature type="transmembrane region" description="Helical" evidence="3">
    <location>
        <begin position="435"/>
        <end position="455"/>
    </location>
</feature>
<feature type="binding site" evidence="1">
    <location>
        <begin position="53"/>
        <end position="54"/>
    </location>
    <ligand>
        <name>FAD</name>
        <dbReference type="ChEBI" id="CHEBI:57692"/>
    </ligand>
</feature>
<feature type="binding site" evidence="1">
    <location>
        <begin position="73"/>
        <end position="74"/>
    </location>
    <ligand>
        <name>FAD</name>
        <dbReference type="ChEBI" id="CHEBI:57692"/>
    </ligand>
</feature>
<feature type="binding site" evidence="1">
    <location>
        <position position="81"/>
    </location>
    <ligand>
        <name>FAD</name>
        <dbReference type="ChEBI" id="CHEBI:57692"/>
    </ligand>
</feature>
<feature type="binding site" evidence="1">
    <location>
        <position position="153"/>
    </location>
    <ligand>
        <name>FAD</name>
        <dbReference type="ChEBI" id="CHEBI:57692"/>
    </ligand>
</feature>
<feature type="binding site" evidence="1">
    <location>
        <position position="169"/>
    </location>
    <ligand>
        <name>FAD</name>
        <dbReference type="ChEBI" id="CHEBI:57692"/>
    </ligand>
</feature>
<feature type="binding site" evidence="1">
    <location>
        <position position="335"/>
    </location>
    <ligand>
        <name>FAD</name>
        <dbReference type="ChEBI" id="CHEBI:57692"/>
    </ligand>
</feature>
<feature type="binding site" evidence="1">
    <location>
        <position position="348"/>
    </location>
    <ligand>
        <name>FAD</name>
        <dbReference type="ChEBI" id="CHEBI:57692"/>
    </ligand>
</feature>
<name>ERG13_ARATH</name>
<comment type="function">
    <text evidence="2">Catalyzes the stereospecific oxidation of squalene to (S)-2,3-epoxysqualene, and is considered to be a rate-limiting enzyme in steroid biosynthesis.</text>
</comment>
<comment type="catalytic activity">
    <reaction evidence="2">
        <text>squalene + reduced [NADPH--hemoprotein reductase] + O2 = (S)-2,3-epoxysqualene + oxidized [NADPH--hemoprotein reductase] + H2O + H(+)</text>
        <dbReference type="Rhea" id="RHEA:25282"/>
        <dbReference type="Rhea" id="RHEA-COMP:11964"/>
        <dbReference type="Rhea" id="RHEA-COMP:11965"/>
        <dbReference type="ChEBI" id="CHEBI:15377"/>
        <dbReference type="ChEBI" id="CHEBI:15378"/>
        <dbReference type="ChEBI" id="CHEBI:15379"/>
        <dbReference type="ChEBI" id="CHEBI:15440"/>
        <dbReference type="ChEBI" id="CHEBI:15441"/>
        <dbReference type="ChEBI" id="CHEBI:57618"/>
        <dbReference type="ChEBI" id="CHEBI:58210"/>
        <dbReference type="EC" id="1.14.14.17"/>
    </reaction>
</comment>
<comment type="cofactor">
    <cofactor evidence="1">
        <name>FAD</name>
        <dbReference type="ChEBI" id="CHEBI:57692"/>
    </cofactor>
</comment>
<comment type="pathway">
    <text>Terpene metabolism; lanosterol biosynthesis; lanosterol from farnesyl diphosphate: step 2/3.</text>
</comment>
<comment type="subcellular location">
    <subcellularLocation>
        <location evidence="5">Membrane</location>
        <topology evidence="5">Multi-pass membrane protein</topology>
    </subcellularLocation>
</comment>
<comment type="tissue specificity">
    <text evidence="4">Expressed mainly in seedlings and inflorescences.</text>
</comment>
<comment type="miscellaneous">
    <text evidence="6">SEQ4 or SEQ5 are unable to complement seq1 mutants.</text>
</comment>
<comment type="similarity">
    <text evidence="5">Belongs to the squalene monooxygenase family.</text>
</comment>
<dbReference type="EC" id="1.14.14.17" evidence="2"/>
<dbReference type="EMBL" id="AJ005929">
    <property type="protein sequence ID" value="CAA06771.1"/>
    <property type="molecule type" value="mRNA"/>
</dbReference>
<dbReference type="EMBL" id="AB010696">
    <property type="protein sequence ID" value="BAB11574.1"/>
    <property type="molecule type" value="Genomic_DNA"/>
</dbReference>
<dbReference type="EMBL" id="AB016883">
    <property type="protein sequence ID" value="BAB11574.1"/>
    <property type="status" value="JOINED"/>
    <property type="molecule type" value="Genomic_DNA"/>
</dbReference>
<dbReference type="EMBL" id="CP002688">
    <property type="status" value="NOT_ANNOTATED_CDS"/>
    <property type="molecule type" value="Genomic_DNA"/>
</dbReference>
<dbReference type="PIR" id="T51364">
    <property type="entry name" value="T51364"/>
</dbReference>
<dbReference type="SMR" id="O65403"/>
<dbReference type="FunCoup" id="O65403">
    <property type="interactions" value="375"/>
</dbReference>
<dbReference type="STRING" id="3702.O65403"/>
<dbReference type="PaxDb" id="3702-AT5G24140.1"/>
<dbReference type="Araport" id="AT5G24140"/>
<dbReference type="TAIR" id="AT5G24140">
    <property type="gene designation" value="SQP2"/>
</dbReference>
<dbReference type="eggNOG" id="KOG1298">
    <property type="taxonomic scope" value="Eukaryota"/>
</dbReference>
<dbReference type="HOGENOM" id="CLU_026390_1_0_1"/>
<dbReference type="InParanoid" id="O65403"/>
<dbReference type="PhylomeDB" id="O65403"/>
<dbReference type="BioCyc" id="ARA:AT5G24140-MONOMER"/>
<dbReference type="BRENDA" id="1.14.14.17">
    <property type="organism ID" value="399"/>
</dbReference>
<dbReference type="UniPathway" id="UPA00767">
    <property type="reaction ID" value="UER00752"/>
</dbReference>
<dbReference type="PRO" id="PR:O65403"/>
<dbReference type="Proteomes" id="UP000006548">
    <property type="component" value="Chromosome 5"/>
</dbReference>
<dbReference type="ExpressionAtlas" id="O65403">
    <property type="expression patterns" value="baseline and differential"/>
</dbReference>
<dbReference type="GO" id="GO:0005783">
    <property type="term" value="C:endoplasmic reticulum"/>
    <property type="evidence" value="ECO:0000318"/>
    <property type="project" value="GO_Central"/>
</dbReference>
<dbReference type="GO" id="GO:0016020">
    <property type="term" value="C:membrane"/>
    <property type="evidence" value="ECO:0007669"/>
    <property type="project" value="UniProtKB-SubCell"/>
</dbReference>
<dbReference type="GO" id="GO:0050660">
    <property type="term" value="F:flavin adenine dinucleotide binding"/>
    <property type="evidence" value="ECO:0007669"/>
    <property type="project" value="InterPro"/>
</dbReference>
<dbReference type="GO" id="GO:0004506">
    <property type="term" value="F:squalene monooxygenase activity"/>
    <property type="evidence" value="ECO:0000318"/>
    <property type="project" value="GO_Central"/>
</dbReference>
<dbReference type="GO" id="GO:0016126">
    <property type="term" value="P:sterol biosynthetic process"/>
    <property type="evidence" value="ECO:0000318"/>
    <property type="project" value="GO_Central"/>
</dbReference>
<dbReference type="FunFam" id="3.50.50.60:FF:000074">
    <property type="entry name" value="Squalene monooxygenase 2"/>
    <property type="match status" value="1"/>
</dbReference>
<dbReference type="Gene3D" id="3.50.50.60">
    <property type="entry name" value="FAD/NAD(P)-binding domain"/>
    <property type="match status" value="1"/>
</dbReference>
<dbReference type="InterPro" id="IPR006076">
    <property type="entry name" value="FAD-dep_OxRdtase"/>
</dbReference>
<dbReference type="InterPro" id="IPR036188">
    <property type="entry name" value="FAD/NAD-bd_sf"/>
</dbReference>
<dbReference type="InterPro" id="IPR013698">
    <property type="entry name" value="Squalene_epoxidase"/>
</dbReference>
<dbReference type="InterPro" id="IPR040125">
    <property type="entry name" value="Squalene_monox"/>
</dbReference>
<dbReference type="PANTHER" id="PTHR10835:SF20">
    <property type="entry name" value="SQUALENE EPOXIDASE 4"/>
    <property type="match status" value="1"/>
</dbReference>
<dbReference type="PANTHER" id="PTHR10835">
    <property type="entry name" value="SQUALENE MONOOXYGENASE"/>
    <property type="match status" value="1"/>
</dbReference>
<dbReference type="Pfam" id="PF01266">
    <property type="entry name" value="DAO"/>
    <property type="match status" value="1"/>
</dbReference>
<dbReference type="Pfam" id="PF08491">
    <property type="entry name" value="SE"/>
    <property type="match status" value="1"/>
</dbReference>
<dbReference type="PRINTS" id="PR00420">
    <property type="entry name" value="RNGMNOXGNASE"/>
</dbReference>
<dbReference type="SUPFAM" id="SSF51905">
    <property type="entry name" value="FAD/NAD(P)-binding domain"/>
    <property type="match status" value="1"/>
</dbReference>
<reference key="1">
    <citation type="journal article" date="1999" name="Plant Mol. Biol.">
        <title>An example of intron junctional sliding in the gene families encoding squalene monooxygenase homologues in Arabidopsis thaliana and Brassica napus.</title>
        <authorList>
            <person name="Schafer U.A."/>
            <person name="Reed D.W."/>
            <person name="Hunter D.G."/>
            <person name="Yao K."/>
            <person name="Weninger A.M."/>
            <person name="Tsang E.W.T."/>
            <person name="Reaney M.J.T."/>
            <person name="MacKenzie S.L."/>
            <person name="Covello P.S."/>
        </authorList>
    </citation>
    <scope>NUCLEOTIDE SEQUENCE [MRNA]</scope>
    <source>
        <strain>cv. Columbia</strain>
    </source>
</reference>
<reference key="2">
    <citation type="journal article" date="1998" name="DNA Res.">
        <title>Structural analysis of Arabidopsis thaliana chromosome 5. V. Sequence features of the regions of 1,381,565 bp covered by twenty one physically assigned P1 and TAC clones.</title>
        <authorList>
            <person name="Kaneko T."/>
            <person name="Kotani H."/>
            <person name="Nakamura Y."/>
            <person name="Sato S."/>
            <person name="Asamizu E."/>
            <person name="Miyajima N."/>
            <person name="Tabata S."/>
        </authorList>
    </citation>
    <scope>NUCLEOTIDE SEQUENCE [LARGE SCALE GENOMIC DNA]</scope>
    <source>
        <strain>cv. Columbia</strain>
    </source>
</reference>
<reference key="3">
    <citation type="journal article" date="1998" name="DNA Res.">
        <title>Structural analysis of Arabidopsis thaliana chromosome 5. VIII. Sequence features of the regions of 1,081,958 bp covered by seventeen physically assigned P1 and TAC clones.</title>
        <authorList>
            <person name="Asamizu E."/>
            <person name="Sato S."/>
            <person name="Kaneko T."/>
            <person name="Nakamura Y."/>
            <person name="Kotani H."/>
            <person name="Miyajima N."/>
            <person name="Tabata S."/>
        </authorList>
    </citation>
    <scope>NUCLEOTIDE SEQUENCE [LARGE SCALE GENOMIC DNA]</scope>
    <source>
        <strain>cv. Columbia</strain>
    </source>
</reference>
<reference key="4">
    <citation type="journal article" date="2017" name="Plant J.">
        <title>Araport11: a complete reannotation of the Arabidopsis thaliana reference genome.</title>
        <authorList>
            <person name="Cheng C.Y."/>
            <person name="Krishnakumar V."/>
            <person name="Chan A.P."/>
            <person name="Thibaud-Nissen F."/>
            <person name="Schobel S."/>
            <person name="Town C.D."/>
        </authorList>
    </citation>
    <scope>GENOME REANNOTATION</scope>
    <source>
        <strain>cv. Columbia</strain>
    </source>
</reference>
<reference key="5">
    <citation type="journal article" date="2007" name="J. Biol. Chem.">
        <title>Arabidopsis thaliana squalene epoxidase 1 is essential for root and seed development.</title>
        <authorList>
            <person name="Rasbery J.M."/>
            <person name="Shan H."/>
            <person name="LeClair R.J."/>
            <person name="Norman M."/>
            <person name="Matsuda S.P."/>
            <person name="Bartel B."/>
        </authorList>
    </citation>
    <scope>IDENTIFICATION</scope>
    <scope>TISSUE SPECIFICITY</scope>
    <scope>GENE FAMILY</scope>
    <scope>NOMENCLATURE</scope>
</reference>